<protein>
    <recommendedName>
        <fullName evidence="1">UPF0270 protein PSPPH_1506</fullName>
    </recommendedName>
</protein>
<gene>
    <name type="ordered locus">PSPPH_1506</name>
</gene>
<evidence type="ECO:0000255" key="1">
    <source>
        <dbReference type="HAMAP-Rule" id="MF_00690"/>
    </source>
</evidence>
<dbReference type="EMBL" id="CP000058">
    <property type="protein sequence ID" value="AAZ33727.1"/>
    <property type="molecule type" value="Genomic_DNA"/>
</dbReference>
<dbReference type="RefSeq" id="WP_003314533.1">
    <property type="nucleotide sequence ID" value="NC_005773.3"/>
</dbReference>
<dbReference type="SMR" id="Q48LG4"/>
<dbReference type="KEGG" id="psp:PSPPH_1506"/>
<dbReference type="eggNOG" id="COG3089">
    <property type="taxonomic scope" value="Bacteria"/>
</dbReference>
<dbReference type="HOGENOM" id="CLU_186759_2_0_6"/>
<dbReference type="Proteomes" id="UP000000551">
    <property type="component" value="Chromosome"/>
</dbReference>
<dbReference type="Gene3D" id="1.10.10.610">
    <property type="entry name" value="YehU-like"/>
    <property type="match status" value="1"/>
</dbReference>
<dbReference type="HAMAP" id="MF_00690">
    <property type="entry name" value="UPF0270"/>
    <property type="match status" value="1"/>
</dbReference>
<dbReference type="InterPro" id="IPR010648">
    <property type="entry name" value="UPF0270"/>
</dbReference>
<dbReference type="InterPro" id="IPR036685">
    <property type="entry name" value="YehU-like_sf"/>
</dbReference>
<dbReference type="NCBIfam" id="NF001441">
    <property type="entry name" value="PRK00304.1"/>
    <property type="match status" value="1"/>
</dbReference>
<dbReference type="Pfam" id="PF06794">
    <property type="entry name" value="UPF0270"/>
    <property type="match status" value="1"/>
</dbReference>
<dbReference type="PIRSF" id="PIRSF006169">
    <property type="entry name" value="UCP006169"/>
    <property type="match status" value="1"/>
</dbReference>
<dbReference type="SUPFAM" id="SSF118001">
    <property type="entry name" value="YehU-like"/>
    <property type="match status" value="1"/>
</dbReference>
<feature type="chain" id="PRO_1000045166" description="UPF0270 protein PSPPH_1506">
    <location>
        <begin position="1"/>
        <end position="75"/>
    </location>
</feature>
<name>Y1506_PSE14</name>
<comment type="similarity">
    <text evidence="1">Belongs to the UPF0270 family.</text>
</comment>
<reference key="1">
    <citation type="journal article" date="2005" name="J. Bacteriol.">
        <title>Whole-genome sequence analysis of Pseudomonas syringae pv. phaseolicola 1448A reveals divergence among pathovars in genes involved in virulence and transposition.</title>
        <authorList>
            <person name="Joardar V."/>
            <person name="Lindeberg M."/>
            <person name="Jackson R.W."/>
            <person name="Selengut J."/>
            <person name="Dodson R."/>
            <person name="Brinkac L.M."/>
            <person name="Daugherty S.C."/>
            <person name="DeBoy R.T."/>
            <person name="Durkin A.S."/>
            <person name="Gwinn Giglio M."/>
            <person name="Madupu R."/>
            <person name="Nelson W.C."/>
            <person name="Rosovitz M.J."/>
            <person name="Sullivan S.A."/>
            <person name="Crabtree J."/>
            <person name="Creasy T."/>
            <person name="Davidsen T.M."/>
            <person name="Haft D.H."/>
            <person name="Zafar N."/>
            <person name="Zhou L."/>
            <person name="Halpin R."/>
            <person name="Holley T."/>
            <person name="Khouri H.M."/>
            <person name="Feldblyum T.V."/>
            <person name="White O."/>
            <person name="Fraser C.M."/>
            <person name="Chatterjee A.K."/>
            <person name="Cartinhour S."/>
            <person name="Schneider D."/>
            <person name="Mansfield J.W."/>
            <person name="Collmer A."/>
            <person name="Buell R."/>
        </authorList>
    </citation>
    <scope>NUCLEOTIDE SEQUENCE [LARGE SCALE GENOMIC DNA]</scope>
    <source>
        <strain>1448A / Race 6</strain>
    </source>
</reference>
<proteinExistence type="inferred from homology"/>
<organism>
    <name type="scientific">Pseudomonas savastanoi pv. phaseolicola (strain 1448A / Race 6)</name>
    <name type="common">Pseudomonas syringae pv. phaseolicola (strain 1448A / Race 6)</name>
    <dbReference type="NCBI Taxonomy" id="264730"/>
    <lineage>
        <taxon>Bacteria</taxon>
        <taxon>Pseudomonadati</taxon>
        <taxon>Pseudomonadota</taxon>
        <taxon>Gammaproteobacteria</taxon>
        <taxon>Pseudomonadales</taxon>
        <taxon>Pseudomonadaceae</taxon>
        <taxon>Pseudomonas</taxon>
    </lineage>
</organism>
<sequence>MLIPYDQLEPDTLTRLIEDFVTREGTDNGDETPLQTRVLRVRHALTKGQAVIFFDLESQQCQLMLKHDVPKEFFE</sequence>
<accession>Q48LG4</accession>